<accession>B2SGG7</accession>
<keyword id="KW-0963">Cytoplasm</keyword>
<keyword id="KW-0413">Isomerase</keyword>
<keyword id="KW-0627">Porphyrin biosynthesis</keyword>
<keyword id="KW-0663">Pyridoxal phosphate</keyword>
<organism>
    <name type="scientific">Francisella tularensis subsp. mediasiatica (strain FSC147)</name>
    <dbReference type="NCBI Taxonomy" id="441952"/>
    <lineage>
        <taxon>Bacteria</taxon>
        <taxon>Pseudomonadati</taxon>
        <taxon>Pseudomonadota</taxon>
        <taxon>Gammaproteobacteria</taxon>
        <taxon>Thiotrichales</taxon>
        <taxon>Francisellaceae</taxon>
        <taxon>Francisella</taxon>
    </lineage>
</organism>
<gene>
    <name evidence="1" type="primary">hemL</name>
    <name type="ordered locus">FTM_0885</name>
</gene>
<evidence type="ECO:0000255" key="1">
    <source>
        <dbReference type="HAMAP-Rule" id="MF_00375"/>
    </source>
</evidence>
<proteinExistence type="inferred from homology"/>
<feature type="chain" id="PRO_1000121890" description="Glutamate-1-semialdehyde 2,1-aminomutase">
    <location>
        <begin position="1"/>
        <end position="431"/>
    </location>
</feature>
<feature type="modified residue" description="N6-(pyridoxal phosphate)lysine" evidence="1">
    <location>
        <position position="269"/>
    </location>
</feature>
<reference key="1">
    <citation type="journal article" date="2009" name="PLoS Pathog.">
        <title>Molecular evolutionary consequences of niche restriction in Francisella tularensis, a facultative intracellular pathogen.</title>
        <authorList>
            <person name="Larsson P."/>
            <person name="Elfsmark D."/>
            <person name="Svensson K."/>
            <person name="Wikstroem P."/>
            <person name="Forsman M."/>
            <person name="Brettin T."/>
            <person name="Keim P."/>
            <person name="Johansson A."/>
        </authorList>
    </citation>
    <scope>NUCLEOTIDE SEQUENCE [LARGE SCALE GENOMIC DNA]</scope>
    <source>
        <strain>FSC147</strain>
    </source>
</reference>
<comment type="catalytic activity">
    <reaction evidence="1">
        <text>(S)-4-amino-5-oxopentanoate = 5-aminolevulinate</text>
        <dbReference type="Rhea" id="RHEA:14265"/>
        <dbReference type="ChEBI" id="CHEBI:57501"/>
        <dbReference type="ChEBI" id="CHEBI:356416"/>
        <dbReference type="EC" id="5.4.3.8"/>
    </reaction>
</comment>
<comment type="cofactor">
    <cofactor evidence="1">
        <name>pyridoxal 5'-phosphate</name>
        <dbReference type="ChEBI" id="CHEBI:597326"/>
    </cofactor>
</comment>
<comment type="pathway">
    <text evidence="1">Porphyrin-containing compound metabolism; protoporphyrin-IX biosynthesis; 5-aminolevulinate from L-glutamyl-tRNA(Glu): step 2/2.</text>
</comment>
<comment type="subunit">
    <text evidence="1">Homodimer.</text>
</comment>
<comment type="subcellular location">
    <subcellularLocation>
        <location evidence="1">Cytoplasm</location>
    </subcellularLocation>
</comment>
<comment type="similarity">
    <text evidence="1">Belongs to the class-III pyridoxal-phosphate-dependent aminotransferase family. HemL subfamily.</text>
</comment>
<protein>
    <recommendedName>
        <fullName evidence="1">Glutamate-1-semialdehyde 2,1-aminomutase</fullName>
        <shortName evidence="1">GSA</shortName>
        <ecNumber evidence="1">5.4.3.8</ecNumber>
    </recommendedName>
    <alternativeName>
        <fullName evidence="1">Glutamate-1-semialdehyde aminotransferase</fullName>
        <shortName evidence="1">GSA-AT</shortName>
    </alternativeName>
</protein>
<sequence length="431" mass="47170">MENKSNSQILFAEAQQYIPGGVNSPVRAFKSVGQEFPRFIKFAKGAYLYDVDWNKYIDYIGSWGPMILGHCDDDVLEVIQCQVKNGLSYGAPCKQEVDLAKKIIELMPNIEQVRFVNSGTEATMSAIRLARAYTCRNKIIKFEGCYHGHADEFLVAAGSGALSLGQPNSPGVPEDVVKDTLVASFNDMESIQALFEKYKDEIACIIVEPIAGNMNMIFPQDDFLAKLRAICDQNSSLLIFDEVMTGFRVALGGAQSIYNVKPDLTTLGKVIGGGMPVGAFGGRKEIMQKVSPAGPVYQAGTLSGNPIAMTAGIKTLEKISQLGFFDELGAKAQKLVDGLNEAAKAYDFKFHAKCLGGMFGLFFCSDKIAVNTFVDLGKTNLKMFNQFFAYMLDNGVYLAPSAYEAGFISIAHSDEDIEKTICLAKKFFQEN</sequence>
<dbReference type="EC" id="5.4.3.8" evidence="1"/>
<dbReference type="EMBL" id="CP000915">
    <property type="protein sequence ID" value="ACD30826.1"/>
    <property type="molecule type" value="Genomic_DNA"/>
</dbReference>
<dbReference type="SMR" id="B2SGG7"/>
<dbReference type="KEGG" id="ftm:FTM_0885"/>
<dbReference type="HOGENOM" id="CLU_016922_1_5_6"/>
<dbReference type="UniPathway" id="UPA00251">
    <property type="reaction ID" value="UER00317"/>
</dbReference>
<dbReference type="GO" id="GO:0005737">
    <property type="term" value="C:cytoplasm"/>
    <property type="evidence" value="ECO:0007669"/>
    <property type="project" value="UniProtKB-SubCell"/>
</dbReference>
<dbReference type="GO" id="GO:0042286">
    <property type="term" value="F:glutamate-1-semialdehyde 2,1-aminomutase activity"/>
    <property type="evidence" value="ECO:0007669"/>
    <property type="project" value="UniProtKB-UniRule"/>
</dbReference>
<dbReference type="GO" id="GO:0030170">
    <property type="term" value="F:pyridoxal phosphate binding"/>
    <property type="evidence" value="ECO:0007669"/>
    <property type="project" value="InterPro"/>
</dbReference>
<dbReference type="GO" id="GO:0008483">
    <property type="term" value="F:transaminase activity"/>
    <property type="evidence" value="ECO:0007669"/>
    <property type="project" value="InterPro"/>
</dbReference>
<dbReference type="GO" id="GO:0006782">
    <property type="term" value="P:protoporphyrinogen IX biosynthetic process"/>
    <property type="evidence" value="ECO:0007669"/>
    <property type="project" value="UniProtKB-UniRule"/>
</dbReference>
<dbReference type="CDD" id="cd00610">
    <property type="entry name" value="OAT_like"/>
    <property type="match status" value="1"/>
</dbReference>
<dbReference type="FunFam" id="3.40.640.10:FF:000021">
    <property type="entry name" value="Glutamate-1-semialdehyde 2,1-aminomutase"/>
    <property type="match status" value="1"/>
</dbReference>
<dbReference type="Gene3D" id="3.90.1150.10">
    <property type="entry name" value="Aspartate Aminotransferase, domain 1"/>
    <property type="match status" value="1"/>
</dbReference>
<dbReference type="Gene3D" id="3.40.640.10">
    <property type="entry name" value="Type I PLP-dependent aspartate aminotransferase-like (Major domain)"/>
    <property type="match status" value="1"/>
</dbReference>
<dbReference type="HAMAP" id="MF_00375">
    <property type="entry name" value="HemL_aminotrans_3"/>
    <property type="match status" value="1"/>
</dbReference>
<dbReference type="InterPro" id="IPR004639">
    <property type="entry name" value="4pyrrol_synth_GluAld_NH2Trfase"/>
</dbReference>
<dbReference type="InterPro" id="IPR005814">
    <property type="entry name" value="Aminotrans_3"/>
</dbReference>
<dbReference type="InterPro" id="IPR049704">
    <property type="entry name" value="Aminotrans_3_PPA_site"/>
</dbReference>
<dbReference type="InterPro" id="IPR015424">
    <property type="entry name" value="PyrdxlP-dep_Trfase"/>
</dbReference>
<dbReference type="InterPro" id="IPR015421">
    <property type="entry name" value="PyrdxlP-dep_Trfase_major"/>
</dbReference>
<dbReference type="InterPro" id="IPR015422">
    <property type="entry name" value="PyrdxlP-dep_Trfase_small"/>
</dbReference>
<dbReference type="NCBIfam" id="TIGR00713">
    <property type="entry name" value="hemL"/>
    <property type="match status" value="1"/>
</dbReference>
<dbReference type="NCBIfam" id="NF000818">
    <property type="entry name" value="PRK00062.1"/>
    <property type="match status" value="1"/>
</dbReference>
<dbReference type="PANTHER" id="PTHR43713">
    <property type="entry name" value="GLUTAMATE-1-SEMIALDEHYDE 2,1-AMINOMUTASE"/>
    <property type="match status" value="1"/>
</dbReference>
<dbReference type="PANTHER" id="PTHR43713:SF3">
    <property type="entry name" value="GLUTAMATE-1-SEMIALDEHYDE 2,1-AMINOMUTASE 1, CHLOROPLASTIC-RELATED"/>
    <property type="match status" value="1"/>
</dbReference>
<dbReference type="Pfam" id="PF00202">
    <property type="entry name" value="Aminotran_3"/>
    <property type="match status" value="1"/>
</dbReference>
<dbReference type="SUPFAM" id="SSF53383">
    <property type="entry name" value="PLP-dependent transferases"/>
    <property type="match status" value="1"/>
</dbReference>
<dbReference type="PROSITE" id="PS00600">
    <property type="entry name" value="AA_TRANSFER_CLASS_3"/>
    <property type="match status" value="1"/>
</dbReference>
<name>GSA_FRATM</name>